<reference key="1">
    <citation type="journal article" date="1997" name="Nature">
        <title>The complete genome sequence of the gastric pathogen Helicobacter pylori.</title>
        <authorList>
            <person name="Tomb J.-F."/>
            <person name="White O."/>
            <person name="Kerlavage A.R."/>
            <person name="Clayton R.A."/>
            <person name="Sutton G.G."/>
            <person name="Fleischmann R.D."/>
            <person name="Ketchum K.A."/>
            <person name="Klenk H.-P."/>
            <person name="Gill S.R."/>
            <person name="Dougherty B.A."/>
            <person name="Nelson K.E."/>
            <person name="Quackenbush J."/>
            <person name="Zhou L."/>
            <person name="Kirkness E.F."/>
            <person name="Peterson S.N."/>
            <person name="Loftus B.J."/>
            <person name="Richardson D.L."/>
            <person name="Dodson R.J."/>
            <person name="Khalak H.G."/>
            <person name="Glodek A."/>
            <person name="McKenney K."/>
            <person name="FitzGerald L.M."/>
            <person name="Lee N."/>
            <person name="Adams M.D."/>
            <person name="Hickey E.K."/>
            <person name="Berg D.E."/>
            <person name="Gocayne J.D."/>
            <person name="Utterback T.R."/>
            <person name="Peterson J.D."/>
            <person name="Kelley J.M."/>
            <person name="Cotton M.D."/>
            <person name="Weidman J.F."/>
            <person name="Fujii C."/>
            <person name="Bowman C."/>
            <person name="Watthey L."/>
            <person name="Wallin E."/>
            <person name="Hayes W.S."/>
            <person name="Borodovsky M."/>
            <person name="Karp P.D."/>
            <person name="Smith H.O."/>
            <person name="Fraser C.M."/>
            <person name="Venter J.C."/>
        </authorList>
    </citation>
    <scope>NUCLEOTIDE SEQUENCE [LARGE SCALE GENOMIC DNA]</scope>
    <source>
        <strain>ATCC 700392 / 26695</strain>
    </source>
</reference>
<reference key="2">
    <citation type="journal article" date="2008" name="J. Biomed. Biotechnol.">
        <title>Structure-based inhibitors exhibit differential activities against Helicobacter pylori and Escherichia coli undecaprenyl pyrophosphate synthases.</title>
        <authorList>
            <person name="Kuo C.J."/>
            <person name="Guo R.T."/>
            <person name="Lu I.L."/>
            <person name="Liu H.G."/>
            <person name="Wu S.Y."/>
            <person name="Ko T.P."/>
            <person name="Wang A.H."/>
            <person name="Liang P.H."/>
        </authorList>
    </citation>
    <scope>X-RAY CRYSTALLOGRAPHY (1.88 ANGSTROMS) OF 4-233</scope>
    <scope>SUBUNIT</scope>
</reference>
<reference key="3">
    <citation type="submission" date="2009-02" db="PDB data bank">
        <title>Biochemical characterization, crystal structure, and inhibitors of Helicobacter pylori undecaprenyl pyrophosphate synthase.</title>
        <authorList>
            <person name="Guo R.T."/>
            <person name="Kuo C.J."/>
            <person name="Chen C.L."/>
            <person name="Ko T.P."/>
            <person name="Liang P.H."/>
            <person name="Wang A.H.-J."/>
        </authorList>
    </citation>
    <scope>X-RAY CRYSTALLOGRAPHY (2.50 ANGSTROMS) IN COMPLEX WITH SUBSTRATE</scope>
    <scope>SUBUNIT</scope>
</reference>
<protein>
    <recommendedName>
        <fullName>Isoprenyl transferase</fullName>
        <ecNumber>2.5.1.-</ecNumber>
    </recommendedName>
</protein>
<organism>
    <name type="scientific">Helicobacter pylori (strain ATCC 700392 / 26695)</name>
    <name type="common">Campylobacter pylori</name>
    <dbReference type="NCBI Taxonomy" id="85962"/>
    <lineage>
        <taxon>Bacteria</taxon>
        <taxon>Pseudomonadati</taxon>
        <taxon>Campylobacterota</taxon>
        <taxon>Epsilonproteobacteria</taxon>
        <taxon>Campylobacterales</taxon>
        <taxon>Helicobacteraceae</taxon>
        <taxon>Helicobacter</taxon>
    </lineage>
</organism>
<sequence>MDNTLKHLAIIMDGNGRWAKLKNKARAYGHKKGVKTLKDITIWCANHKLECLTLYAFSTENWKRPKSEVDFLMKMLKKYLKDERSTYLNNNIRFRAIGDLEGFSKELRDTILQLENDTRHFKDFTQVLALNYGSKNELSRAFKSLLESPPSHINLLESLENEISNRLDTHDLPEVDLLLRTGGEMRLSNFLLWQSSYAELFFTPILWPDFTPKDLENIISDFYKRVRKFGELKC</sequence>
<accession>P55984</accession>
<evidence type="ECO:0000250" key="1"/>
<evidence type="ECO:0000269" key="2">
    <source>
    </source>
</evidence>
<evidence type="ECO:0000269" key="3">
    <source ref="3"/>
</evidence>
<evidence type="ECO:0000305" key="4"/>
<evidence type="ECO:0007829" key="5">
    <source>
        <dbReference type="PDB" id="2D2R"/>
    </source>
</evidence>
<evidence type="ECO:0007829" key="6">
    <source>
        <dbReference type="PDB" id="2DTN"/>
    </source>
</evidence>
<name>ISPT_HELPY</name>
<keyword id="KW-0002">3D-structure</keyword>
<keyword id="KW-0460">Magnesium</keyword>
<keyword id="KW-0479">Metal-binding</keyword>
<keyword id="KW-1185">Reference proteome</keyword>
<keyword id="KW-0808">Transferase</keyword>
<comment type="function">
    <text evidence="1">Catalyzes the condensation of isopentenyl diphosphate (IPP) with allylic pyrophosphates generating different type of terpenoids.</text>
</comment>
<comment type="cofactor">
    <cofactor evidence="1">
        <name>Mg(2+)</name>
        <dbReference type="ChEBI" id="CHEBI:18420"/>
    </cofactor>
    <text evidence="1">Binds 2 magnesium ions per subunit.</text>
</comment>
<comment type="subunit">
    <text evidence="2 3">Homodimer.</text>
</comment>
<comment type="similarity">
    <text evidence="4">Belongs to the UPP synthase family.</text>
</comment>
<dbReference type="EC" id="2.5.1.-"/>
<dbReference type="EMBL" id="AE000511">
    <property type="protein sequence ID" value="AAD08263.1"/>
    <property type="molecule type" value="Genomic_DNA"/>
</dbReference>
<dbReference type="PIR" id="E64672">
    <property type="entry name" value="E64672"/>
</dbReference>
<dbReference type="RefSeq" id="NP_208013.1">
    <property type="nucleotide sequence ID" value="NC_000915.1"/>
</dbReference>
<dbReference type="RefSeq" id="WP_000370674.1">
    <property type="nucleotide sequence ID" value="NC_018939.1"/>
</dbReference>
<dbReference type="PDB" id="2D2R">
    <property type="method" value="X-ray"/>
    <property type="resolution" value="1.88 A"/>
    <property type="chains" value="A/B=2-233"/>
</dbReference>
<dbReference type="PDB" id="2DTN">
    <property type="method" value="X-ray"/>
    <property type="resolution" value="2.50 A"/>
    <property type="chains" value="A/B=2-233"/>
</dbReference>
<dbReference type="PDBsum" id="2D2R"/>
<dbReference type="PDBsum" id="2DTN"/>
<dbReference type="SMR" id="P55984"/>
<dbReference type="FunCoup" id="P55984">
    <property type="interactions" value="336"/>
</dbReference>
<dbReference type="IntAct" id="P55984">
    <property type="interactions" value="2"/>
</dbReference>
<dbReference type="STRING" id="85962.HP_1221"/>
<dbReference type="PaxDb" id="85962-C694_06305"/>
<dbReference type="EnsemblBacteria" id="AAD08263">
    <property type="protein sequence ID" value="AAD08263"/>
    <property type="gene ID" value="HP_1221"/>
</dbReference>
<dbReference type="KEGG" id="heo:C694_06305"/>
<dbReference type="KEGG" id="hpy:HP_1221"/>
<dbReference type="PATRIC" id="fig|85962.47.peg.1309"/>
<dbReference type="eggNOG" id="COG0020">
    <property type="taxonomic scope" value="Bacteria"/>
</dbReference>
<dbReference type="InParanoid" id="P55984"/>
<dbReference type="OrthoDB" id="4191603at2"/>
<dbReference type="PhylomeDB" id="P55984"/>
<dbReference type="BRENDA" id="2.5.1.31">
    <property type="organism ID" value="2604"/>
</dbReference>
<dbReference type="EvolutionaryTrace" id="P55984"/>
<dbReference type="Proteomes" id="UP000000429">
    <property type="component" value="Chromosome"/>
</dbReference>
<dbReference type="GO" id="GO:0005829">
    <property type="term" value="C:cytosol"/>
    <property type="evidence" value="ECO:0000318"/>
    <property type="project" value="GO_Central"/>
</dbReference>
<dbReference type="GO" id="GO:0008834">
    <property type="term" value="F:ditrans,polycis-undecaprenyl-diphosphate synthase [(2E,6E)-farnesyl-diphosphate specific] activity"/>
    <property type="evidence" value="ECO:0000318"/>
    <property type="project" value="GO_Central"/>
</dbReference>
<dbReference type="GO" id="GO:0000287">
    <property type="term" value="F:magnesium ion binding"/>
    <property type="evidence" value="ECO:0000318"/>
    <property type="project" value="GO_Central"/>
</dbReference>
<dbReference type="GO" id="GO:0016094">
    <property type="term" value="P:polyprenol biosynthetic process"/>
    <property type="evidence" value="ECO:0000318"/>
    <property type="project" value="GO_Central"/>
</dbReference>
<dbReference type="CDD" id="cd00475">
    <property type="entry name" value="Cis_IPPS"/>
    <property type="match status" value="1"/>
</dbReference>
<dbReference type="FunFam" id="3.40.1180.10:FF:000003">
    <property type="entry name" value="Isoprenyl transferase 2"/>
    <property type="match status" value="1"/>
</dbReference>
<dbReference type="Gene3D" id="3.40.1180.10">
    <property type="entry name" value="Decaprenyl diphosphate synthase-like"/>
    <property type="match status" value="1"/>
</dbReference>
<dbReference type="HAMAP" id="MF_01139">
    <property type="entry name" value="ISPT"/>
    <property type="match status" value="1"/>
</dbReference>
<dbReference type="InterPro" id="IPR001441">
    <property type="entry name" value="UPP_synth-like"/>
</dbReference>
<dbReference type="InterPro" id="IPR018520">
    <property type="entry name" value="UPP_synth-like_CS"/>
</dbReference>
<dbReference type="InterPro" id="IPR036424">
    <property type="entry name" value="UPP_synth-like_sf"/>
</dbReference>
<dbReference type="NCBIfam" id="NF011407">
    <property type="entry name" value="PRK14833.1"/>
    <property type="match status" value="1"/>
</dbReference>
<dbReference type="NCBIfam" id="TIGR00055">
    <property type="entry name" value="uppS"/>
    <property type="match status" value="1"/>
</dbReference>
<dbReference type="PANTHER" id="PTHR10291:SF0">
    <property type="entry name" value="DEHYDRODOLICHYL DIPHOSPHATE SYNTHASE 2"/>
    <property type="match status" value="1"/>
</dbReference>
<dbReference type="PANTHER" id="PTHR10291">
    <property type="entry name" value="DEHYDRODOLICHYL DIPHOSPHATE SYNTHASE FAMILY MEMBER"/>
    <property type="match status" value="1"/>
</dbReference>
<dbReference type="Pfam" id="PF01255">
    <property type="entry name" value="Prenyltransf"/>
    <property type="match status" value="1"/>
</dbReference>
<dbReference type="SUPFAM" id="SSF64005">
    <property type="entry name" value="Undecaprenyl diphosphate synthase"/>
    <property type="match status" value="1"/>
</dbReference>
<dbReference type="PROSITE" id="PS01066">
    <property type="entry name" value="UPP_SYNTHASE"/>
    <property type="match status" value="1"/>
</dbReference>
<feature type="chain" id="PRO_0000123623" description="Isoprenyl transferase">
    <location>
        <begin position="1"/>
        <end position="234"/>
    </location>
</feature>
<feature type="active site" evidence="1">
    <location>
        <position position="13"/>
    </location>
</feature>
<feature type="active site" description="Proton acceptor" evidence="1">
    <location>
        <position position="61"/>
    </location>
</feature>
<feature type="binding site" evidence="1">
    <location>
        <position position="13"/>
    </location>
    <ligand>
        <name>Mg(2+)</name>
        <dbReference type="ChEBI" id="CHEBI:18420"/>
    </ligand>
</feature>
<feature type="binding site" evidence="1">
    <location>
        <begin position="14"/>
        <end position="17"/>
    </location>
    <ligand>
        <name>substrate</name>
    </ligand>
</feature>
<feature type="binding site" evidence="1">
    <location>
        <position position="18"/>
    </location>
    <ligand>
        <name>substrate</name>
    </ligand>
</feature>
<feature type="binding site" evidence="3">
    <location>
        <position position="26"/>
    </location>
    <ligand>
        <name>substrate</name>
    </ligand>
</feature>
<feature type="binding site" evidence="1">
    <location>
        <position position="30"/>
    </location>
    <ligand>
        <name>substrate</name>
    </ligand>
</feature>
<feature type="binding site" evidence="1">
    <location>
        <begin position="58"/>
        <end position="60"/>
    </location>
    <ligand>
        <name>substrate</name>
    </ligand>
</feature>
<feature type="binding site" evidence="1">
    <location>
        <position position="62"/>
    </location>
    <ligand>
        <name>substrate</name>
    </ligand>
</feature>
<feature type="binding site" evidence="1">
    <location>
        <position position="64"/>
    </location>
    <ligand>
        <name>substrate</name>
    </ligand>
</feature>
<feature type="binding site" evidence="1">
    <location>
        <position position="180"/>
    </location>
    <ligand>
        <name>substrate</name>
    </ligand>
</feature>
<feature type="binding site" evidence="1">
    <location>
        <begin position="186"/>
        <end position="188"/>
    </location>
    <ligand>
        <name>substrate</name>
    </ligand>
</feature>
<feature type="binding site" evidence="1">
    <location>
        <position position="199"/>
    </location>
    <ligand>
        <name>Mg(2+)</name>
        <dbReference type="ChEBI" id="CHEBI:18420"/>
    </ligand>
</feature>
<feature type="strand" evidence="5">
    <location>
        <begin position="7"/>
        <end position="11"/>
    </location>
</feature>
<feature type="helix" evidence="5">
    <location>
        <begin position="15"/>
        <end position="20"/>
    </location>
</feature>
<feature type="turn" evidence="5">
    <location>
        <begin position="21"/>
        <end position="23"/>
    </location>
</feature>
<feature type="helix" evidence="5">
    <location>
        <begin position="26"/>
        <end position="45"/>
    </location>
</feature>
<feature type="turn" evidence="5">
    <location>
        <begin position="46"/>
        <end position="48"/>
    </location>
</feature>
<feature type="strand" evidence="5">
    <location>
        <begin position="50"/>
        <end position="57"/>
    </location>
</feature>
<feature type="helix" evidence="5">
    <location>
        <begin position="69"/>
        <end position="89"/>
    </location>
</feature>
<feature type="strand" evidence="5">
    <location>
        <begin position="93"/>
        <end position="98"/>
    </location>
</feature>
<feature type="helix" evidence="5">
    <location>
        <begin position="100"/>
        <end position="102"/>
    </location>
</feature>
<feature type="helix" evidence="5">
    <location>
        <begin position="105"/>
        <end position="118"/>
    </location>
</feature>
<feature type="strand" evidence="5">
    <location>
        <begin position="125"/>
        <end position="131"/>
    </location>
</feature>
<feature type="helix" evidence="5">
    <location>
        <begin position="134"/>
        <end position="147"/>
    </location>
</feature>
<feature type="helix" evidence="5">
    <location>
        <begin position="153"/>
        <end position="155"/>
    </location>
</feature>
<feature type="helix" evidence="5">
    <location>
        <begin position="160"/>
        <end position="164"/>
    </location>
</feature>
<feature type="turn" evidence="5">
    <location>
        <begin position="168"/>
        <end position="171"/>
    </location>
</feature>
<feature type="strand" evidence="5">
    <location>
        <begin position="176"/>
        <end position="180"/>
    </location>
</feature>
<feature type="strand" evidence="6">
    <location>
        <begin position="189"/>
        <end position="191"/>
    </location>
</feature>
<feature type="turn" evidence="5">
    <location>
        <begin position="192"/>
        <end position="197"/>
    </location>
</feature>
<feature type="strand" evidence="5">
    <location>
        <begin position="199"/>
        <end position="202"/>
    </location>
</feature>
<feature type="helix" evidence="5">
    <location>
        <begin position="207"/>
        <end position="209"/>
    </location>
</feature>
<feature type="helix" evidence="5">
    <location>
        <begin position="212"/>
        <end position="225"/>
    </location>
</feature>
<proteinExistence type="evidence at protein level"/>
<gene>
    <name type="primary">uppS</name>
    <name type="ordered locus">HP_1221</name>
</gene>